<name>RL17_YERPA</name>
<reference key="1">
    <citation type="journal article" date="2006" name="J. Bacteriol.">
        <title>Complete genome sequence of Yersinia pestis strains Antiqua and Nepal516: evidence of gene reduction in an emerging pathogen.</title>
        <authorList>
            <person name="Chain P.S.G."/>
            <person name="Hu P."/>
            <person name="Malfatti S.A."/>
            <person name="Radnedge L."/>
            <person name="Larimer F."/>
            <person name="Vergez L.M."/>
            <person name="Worsham P."/>
            <person name="Chu M.C."/>
            <person name="Andersen G.L."/>
        </authorList>
    </citation>
    <scope>NUCLEOTIDE SEQUENCE [LARGE SCALE GENOMIC DNA]</scope>
    <source>
        <strain>Antiqua</strain>
    </source>
</reference>
<keyword id="KW-0687">Ribonucleoprotein</keyword>
<keyword id="KW-0689">Ribosomal protein</keyword>
<protein>
    <recommendedName>
        <fullName evidence="1">Large ribosomal subunit protein bL17</fullName>
    </recommendedName>
    <alternativeName>
        <fullName evidence="2">50S ribosomal protein L17</fullName>
    </alternativeName>
</protein>
<organism>
    <name type="scientific">Yersinia pestis bv. Antiqua (strain Antiqua)</name>
    <dbReference type="NCBI Taxonomy" id="360102"/>
    <lineage>
        <taxon>Bacteria</taxon>
        <taxon>Pseudomonadati</taxon>
        <taxon>Pseudomonadota</taxon>
        <taxon>Gammaproteobacteria</taxon>
        <taxon>Enterobacterales</taxon>
        <taxon>Yersiniaceae</taxon>
        <taxon>Yersinia</taxon>
    </lineage>
</organism>
<sequence>MRHRKSGRQLNRNSSHRQAMFRNMAGSLVRHEIIKTTLPKAKELRRVVEPLITLAKTDNVANRRLAFARTRDNEIVAKLFNELGPRFASRAGGYTRILKCGFRAGDNAPMAYIELVDRAASQAEVVAAE</sequence>
<feature type="chain" id="PRO_0000267974" description="Large ribosomal subunit protein bL17">
    <location>
        <begin position="1"/>
        <end position="129"/>
    </location>
</feature>
<accession>Q1C2X2</accession>
<dbReference type="EMBL" id="CP000308">
    <property type="protein sequence ID" value="ABG15200.1"/>
    <property type="molecule type" value="Genomic_DNA"/>
</dbReference>
<dbReference type="RefSeq" id="WP_002209014.1">
    <property type="nucleotide sequence ID" value="NZ_CP009906.1"/>
</dbReference>
<dbReference type="SMR" id="Q1C2X2"/>
<dbReference type="GeneID" id="57974369"/>
<dbReference type="KEGG" id="ypa:YPA_3238"/>
<dbReference type="Proteomes" id="UP000001971">
    <property type="component" value="Chromosome"/>
</dbReference>
<dbReference type="GO" id="GO:0022625">
    <property type="term" value="C:cytosolic large ribosomal subunit"/>
    <property type="evidence" value="ECO:0007669"/>
    <property type="project" value="TreeGrafter"/>
</dbReference>
<dbReference type="GO" id="GO:0003735">
    <property type="term" value="F:structural constituent of ribosome"/>
    <property type="evidence" value="ECO:0007669"/>
    <property type="project" value="InterPro"/>
</dbReference>
<dbReference type="GO" id="GO:0006412">
    <property type="term" value="P:translation"/>
    <property type="evidence" value="ECO:0007669"/>
    <property type="project" value="UniProtKB-UniRule"/>
</dbReference>
<dbReference type="FunFam" id="3.90.1030.10:FF:000001">
    <property type="entry name" value="50S ribosomal protein L17"/>
    <property type="match status" value="1"/>
</dbReference>
<dbReference type="Gene3D" id="3.90.1030.10">
    <property type="entry name" value="Ribosomal protein L17"/>
    <property type="match status" value="1"/>
</dbReference>
<dbReference type="HAMAP" id="MF_01368">
    <property type="entry name" value="Ribosomal_bL17"/>
    <property type="match status" value="1"/>
</dbReference>
<dbReference type="InterPro" id="IPR000456">
    <property type="entry name" value="Ribosomal_bL17"/>
</dbReference>
<dbReference type="InterPro" id="IPR047859">
    <property type="entry name" value="Ribosomal_bL17_CS"/>
</dbReference>
<dbReference type="InterPro" id="IPR036373">
    <property type="entry name" value="Ribosomal_bL17_sf"/>
</dbReference>
<dbReference type="NCBIfam" id="TIGR00059">
    <property type="entry name" value="L17"/>
    <property type="match status" value="1"/>
</dbReference>
<dbReference type="PANTHER" id="PTHR14413:SF16">
    <property type="entry name" value="LARGE RIBOSOMAL SUBUNIT PROTEIN BL17M"/>
    <property type="match status" value="1"/>
</dbReference>
<dbReference type="PANTHER" id="PTHR14413">
    <property type="entry name" value="RIBOSOMAL PROTEIN L17"/>
    <property type="match status" value="1"/>
</dbReference>
<dbReference type="Pfam" id="PF01196">
    <property type="entry name" value="Ribosomal_L17"/>
    <property type="match status" value="1"/>
</dbReference>
<dbReference type="SUPFAM" id="SSF64263">
    <property type="entry name" value="Prokaryotic ribosomal protein L17"/>
    <property type="match status" value="1"/>
</dbReference>
<dbReference type="PROSITE" id="PS01167">
    <property type="entry name" value="RIBOSOMAL_L17"/>
    <property type="match status" value="1"/>
</dbReference>
<comment type="subunit">
    <text evidence="1">Part of the 50S ribosomal subunit. Contacts protein L32.</text>
</comment>
<comment type="similarity">
    <text evidence="1">Belongs to the bacterial ribosomal protein bL17 family.</text>
</comment>
<proteinExistence type="inferred from homology"/>
<evidence type="ECO:0000255" key="1">
    <source>
        <dbReference type="HAMAP-Rule" id="MF_01368"/>
    </source>
</evidence>
<evidence type="ECO:0000305" key="2"/>
<gene>
    <name evidence="1" type="primary">rplQ</name>
    <name type="ordered locus">YPA_3238</name>
</gene>